<dbReference type="EC" id="4.2.1.11" evidence="1"/>
<dbReference type="EMBL" id="AE017333">
    <property type="protein sequence ID" value="AAU42482.1"/>
    <property type="molecule type" value="Genomic_DNA"/>
</dbReference>
<dbReference type="EMBL" id="CP000002">
    <property type="protein sequence ID" value="AAU25111.1"/>
    <property type="molecule type" value="Genomic_DNA"/>
</dbReference>
<dbReference type="RefSeq" id="WP_003185460.1">
    <property type="nucleotide sequence ID" value="NC_006322.1"/>
</dbReference>
<dbReference type="SMR" id="Q65EN2"/>
<dbReference type="STRING" id="279010.BL03468"/>
<dbReference type="GeneID" id="92859759"/>
<dbReference type="KEGG" id="bld:BLi03661"/>
<dbReference type="KEGG" id="bli:BL03468"/>
<dbReference type="PATRIC" id="fig|279010.13.peg.3727"/>
<dbReference type="eggNOG" id="COG0148">
    <property type="taxonomic scope" value="Bacteria"/>
</dbReference>
<dbReference type="HOGENOM" id="CLU_031223_2_1_9"/>
<dbReference type="UniPathway" id="UPA00109">
    <property type="reaction ID" value="UER00187"/>
</dbReference>
<dbReference type="Proteomes" id="UP000000606">
    <property type="component" value="Chromosome"/>
</dbReference>
<dbReference type="GO" id="GO:0009986">
    <property type="term" value="C:cell surface"/>
    <property type="evidence" value="ECO:0007669"/>
    <property type="project" value="UniProtKB-SubCell"/>
</dbReference>
<dbReference type="GO" id="GO:0005576">
    <property type="term" value="C:extracellular region"/>
    <property type="evidence" value="ECO:0007669"/>
    <property type="project" value="UniProtKB-SubCell"/>
</dbReference>
<dbReference type="GO" id="GO:0000015">
    <property type="term" value="C:phosphopyruvate hydratase complex"/>
    <property type="evidence" value="ECO:0007669"/>
    <property type="project" value="InterPro"/>
</dbReference>
<dbReference type="GO" id="GO:0000287">
    <property type="term" value="F:magnesium ion binding"/>
    <property type="evidence" value="ECO:0007669"/>
    <property type="project" value="UniProtKB-UniRule"/>
</dbReference>
<dbReference type="GO" id="GO:0004634">
    <property type="term" value="F:phosphopyruvate hydratase activity"/>
    <property type="evidence" value="ECO:0007669"/>
    <property type="project" value="UniProtKB-UniRule"/>
</dbReference>
<dbReference type="GO" id="GO:0006096">
    <property type="term" value="P:glycolytic process"/>
    <property type="evidence" value="ECO:0007669"/>
    <property type="project" value="UniProtKB-UniRule"/>
</dbReference>
<dbReference type="CDD" id="cd03313">
    <property type="entry name" value="enolase"/>
    <property type="match status" value="1"/>
</dbReference>
<dbReference type="FunFam" id="3.20.20.120:FF:000001">
    <property type="entry name" value="Enolase"/>
    <property type="match status" value="1"/>
</dbReference>
<dbReference type="FunFam" id="3.30.390.10:FF:000001">
    <property type="entry name" value="Enolase"/>
    <property type="match status" value="1"/>
</dbReference>
<dbReference type="Gene3D" id="3.20.20.120">
    <property type="entry name" value="Enolase-like C-terminal domain"/>
    <property type="match status" value="1"/>
</dbReference>
<dbReference type="Gene3D" id="3.30.390.10">
    <property type="entry name" value="Enolase-like, N-terminal domain"/>
    <property type="match status" value="1"/>
</dbReference>
<dbReference type="HAMAP" id="MF_00318">
    <property type="entry name" value="Enolase"/>
    <property type="match status" value="1"/>
</dbReference>
<dbReference type="InterPro" id="IPR000941">
    <property type="entry name" value="Enolase"/>
</dbReference>
<dbReference type="InterPro" id="IPR036849">
    <property type="entry name" value="Enolase-like_C_sf"/>
</dbReference>
<dbReference type="InterPro" id="IPR029017">
    <property type="entry name" value="Enolase-like_N"/>
</dbReference>
<dbReference type="InterPro" id="IPR020810">
    <property type="entry name" value="Enolase_C"/>
</dbReference>
<dbReference type="InterPro" id="IPR020809">
    <property type="entry name" value="Enolase_CS"/>
</dbReference>
<dbReference type="InterPro" id="IPR020811">
    <property type="entry name" value="Enolase_N"/>
</dbReference>
<dbReference type="NCBIfam" id="TIGR01060">
    <property type="entry name" value="eno"/>
    <property type="match status" value="1"/>
</dbReference>
<dbReference type="PANTHER" id="PTHR11902">
    <property type="entry name" value="ENOLASE"/>
    <property type="match status" value="1"/>
</dbReference>
<dbReference type="PANTHER" id="PTHR11902:SF1">
    <property type="entry name" value="ENOLASE"/>
    <property type="match status" value="1"/>
</dbReference>
<dbReference type="Pfam" id="PF00113">
    <property type="entry name" value="Enolase_C"/>
    <property type="match status" value="1"/>
</dbReference>
<dbReference type="Pfam" id="PF03952">
    <property type="entry name" value="Enolase_N"/>
    <property type="match status" value="1"/>
</dbReference>
<dbReference type="PIRSF" id="PIRSF001400">
    <property type="entry name" value="Enolase"/>
    <property type="match status" value="1"/>
</dbReference>
<dbReference type="PRINTS" id="PR00148">
    <property type="entry name" value="ENOLASE"/>
</dbReference>
<dbReference type="SFLD" id="SFLDS00001">
    <property type="entry name" value="Enolase"/>
    <property type="match status" value="1"/>
</dbReference>
<dbReference type="SFLD" id="SFLDF00002">
    <property type="entry name" value="enolase"/>
    <property type="match status" value="1"/>
</dbReference>
<dbReference type="SMART" id="SM01192">
    <property type="entry name" value="Enolase_C"/>
    <property type="match status" value="1"/>
</dbReference>
<dbReference type="SMART" id="SM01193">
    <property type="entry name" value="Enolase_N"/>
    <property type="match status" value="1"/>
</dbReference>
<dbReference type="SUPFAM" id="SSF51604">
    <property type="entry name" value="Enolase C-terminal domain-like"/>
    <property type="match status" value="1"/>
</dbReference>
<dbReference type="SUPFAM" id="SSF54826">
    <property type="entry name" value="Enolase N-terminal domain-like"/>
    <property type="match status" value="1"/>
</dbReference>
<dbReference type="PROSITE" id="PS00164">
    <property type="entry name" value="ENOLASE"/>
    <property type="match status" value="1"/>
</dbReference>
<gene>
    <name evidence="1" type="primary">eno</name>
    <name type="ordered locus">BLi03661</name>
    <name type="ordered locus">BL03468</name>
</gene>
<proteinExistence type="inferred from homology"/>
<sequence>MPYIVDVYAREVLDSRGNPTVEVEVYTESGAFGRALVPSGASTGEYEAVELRDGDKDRYLGKGVLTAVNNVNEIIAPELIGFDVTEQVSIDKLLIELDGTENKGKLGANAILGVSMAVARAAADFLQIPLYQYLGGFNSKTLPVPMMNIVNGGEHADNNVDIQEFMIMPVGAENFREALRMGAQIFHSLKSVLKEKGLNTAVGDEGGFAPNLGSNEEALQTIVEAIEKAGFKPGEEVKLAMDAASSEFYNKEDGKYHLAGEGVVKTSAEMVDWYEELTSKYPIISIEDGLDENDWEGHKLLTERLGSKVQLVGDDLFVTNTKKLAEGIKNGVGNSILIKVNQIGTLTETFDAIEMAKRAGYTAVISHRSGETEDSTIADIAVATNAGQIKTGAPSRTDRVAKYNQLLRIEDQLAETAQYHGIQSFYNLNK</sequence>
<name>ENO_BACLD</name>
<protein>
    <recommendedName>
        <fullName evidence="1">Enolase</fullName>
        <ecNumber evidence="1">4.2.1.11</ecNumber>
    </recommendedName>
    <alternativeName>
        <fullName evidence="1">2-phospho-D-glycerate hydro-lyase</fullName>
    </alternativeName>
    <alternativeName>
        <fullName evidence="1">2-phosphoglycerate dehydratase</fullName>
    </alternativeName>
</protein>
<comment type="function">
    <text evidence="1">Catalyzes the reversible conversion of 2-phosphoglycerate (2-PG) into phosphoenolpyruvate (PEP). It is essential for the degradation of carbohydrates via glycolysis.</text>
</comment>
<comment type="catalytic activity">
    <reaction evidence="1">
        <text>(2R)-2-phosphoglycerate = phosphoenolpyruvate + H2O</text>
        <dbReference type="Rhea" id="RHEA:10164"/>
        <dbReference type="ChEBI" id="CHEBI:15377"/>
        <dbReference type="ChEBI" id="CHEBI:58289"/>
        <dbReference type="ChEBI" id="CHEBI:58702"/>
        <dbReference type="EC" id="4.2.1.11"/>
    </reaction>
</comment>
<comment type="cofactor">
    <cofactor evidence="1">
        <name>Mg(2+)</name>
        <dbReference type="ChEBI" id="CHEBI:18420"/>
    </cofactor>
    <text evidence="1">Binds a second Mg(2+) ion via substrate during catalysis.</text>
</comment>
<comment type="pathway">
    <text evidence="1">Carbohydrate degradation; glycolysis; pyruvate from D-glyceraldehyde 3-phosphate: step 4/5.</text>
</comment>
<comment type="subcellular location">
    <subcellularLocation>
        <location evidence="1">Cytoplasm</location>
    </subcellularLocation>
    <subcellularLocation>
        <location evidence="1">Secreted</location>
    </subcellularLocation>
    <subcellularLocation>
        <location evidence="1">Cell surface</location>
    </subcellularLocation>
    <text evidence="1">Fractions of enolase are present in both the cytoplasm and on the cell surface.</text>
</comment>
<comment type="similarity">
    <text evidence="1">Belongs to the enolase family.</text>
</comment>
<keyword id="KW-0963">Cytoplasm</keyword>
<keyword id="KW-0324">Glycolysis</keyword>
<keyword id="KW-0456">Lyase</keyword>
<keyword id="KW-0460">Magnesium</keyword>
<keyword id="KW-0479">Metal-binding</keyword>
<keyword id="KW-1185">Reference proteome</keyword>
<keyword id="KW-0964">Secreted</keyword>
<accession>Q65EN2</accession>
<accession>Q62Q49</accession>
<feature type="chain" id="PRO_0000266999" description="Enolase">
    <location>
        <begin position="1"/>
        <end position="430"/>
    </location>
</feature>
<feature type="active site" description="Proton donor" evidence="1">
    <location>
        <position position="205"/>
    </location>
</feature>
<feature type="active site" description="Proton acceptor" evidence="1">
    <location>
        <position position="339"/>
    </location>
</feature>
<feature type="binding site" evidence="1">
    <location>
        <position position="163"/>
    </location>
    <ligand>
        <name>(2R)-2-phosphoglycerate</name>
        <dbReference type="ChEBI" id="CHEBI:58289"/>
    </ligand>
</feature>
<feature type="binding site" evidence="1">
    <location>
        <position position="242"/>
    </location>
    <ligand>
        <name>Mg(2+)</name>
        <dbReference type="ChEBI" id="CHEBI:18420"/>
    </ligand>
</feature>
<feature type="binding site" evidence="1">
    <location>
        <position position="287"/>
    </location>
    <ligand>
        <name>Mg(2+)</name>
        <dbReference type="ChEBI" id="CHEBI:18420"/>
    </ligand>
</feature>
<feature type="binding site" evidence="1">
    <location>
        <position position="314"/>
    </location>
    <ligand>
        <name>Mg(2+)</name>
        <dbReference type="ChEBI" id="CHEBI:18420"/>
    </ligand>
</feature>
<feature type="binding site" evidence="1">
    <location>
        <position position="339"/>
    </location>
    <ligand>
        <name>(2R)-2-phosphoglycerate</name>
        <dbReference type="ChEBI" id="CHEBI:58289"/>
    </ligand>
</feature>
<feature type="binding site" evidence="1">
    <location>
        <position position="368"/>
    </location>
    <ligand>
        <name>(2R)-2-phosphoglycerate</name>
        <dbReference type="ChEBI" id="CHEBI:58289"/>
    </ligand>
</feature>
<feature type="binding site" evidence="1">
    <location>
        <position position="369"/>
    </location>
    <ligand>
        <name>(2R)-2-phosphoglycerate</name>
        <dbReference type="ChEBI" id="CHEBI:58289"/>
    </ligand>
</feature>
<feature type="binding site" evidence="1">
    <location>
        <position position="390"/>
    </location>
    <ligand>
        <name>(2R)-2-phosphoglycerate</name>
        <dbReference type="ChEBI" id="CHEBI:58289"/>
    </ligand>
</feature>
<organism>
    <name type="scientific">Bacillus licheniformis (strain ATCC 14580 / DSM 13 / JCM 2505 / CCUG 7422 / NBRC 12200 / NCIMB 9375 / NCTC 10341 / NRRL NRS-1264 / Gibson 46)</name>
    <dbReference type="NCBI Taxonomy" id="279010"/>
    <lineage>
        <taxon>Bacteria</taxon>
        <taxon>Bacillati</taxon>
        <taxon>Bacillota</taxon>
        <taxon>Bacilli</taxon>
        <taxon>Bacillales</taxon>
        <taxon>Bacillaceae</taxon>
        <taxon>Bacillus</taxon>
    </lineage>
</organism>
<evidence type="ECO:0000255" key="1">
    <source>
        <dbReference type="HAMAP-Rule" id="MF_00318"/>
    </source>
</evidence>
<reference key="1">
    <citation type="journal article" date="2004" name="J. Mol. Microbiol. Biotechnol.">
        <title>The complete genome sequence of Bacillus licheniformis DSM13, an organism with great industrial potential.</title>
        <authorList>
            <person name="Veith B."/>
            <person name="Herzberg C."/>
            <person name="Steckel S."/>
            <person name="Feesche J."/>
            <person name="Maurer K.H."/>
            <person name="Ehrenreich P."/>
            <person name="Baeumer S."/>
            <person name="Henne A."/>
            <person name="Liesegang H."/>
            <person name="Merkl R."/>
            <person name="Ehrenreich A."/>
            <person name="Gottschalk G."/>
        </authorList>
    </citation>
    <scope>NUCLEOTIDE SEQUENCE [LARGE SCALE GENOMIC DNA]</scope>
    <source>
        <strain>ATCC 14580 / DSM 13 / JCM 2505 / CCUG 7422 / NBRC 12200 / NCIMB 9375 / NCTC 10341 / NRRL NRS-1264 / Gibson 46</strain>
    </source>
</reference>
<reference key="2">
    <citation type="journal article" date="2004" name="Genome Biol.">
        <title>Complete genome sequence of the industrial bacterium Bacillus licheniformis and comparisons with closely related Bacillus species.</title>
        <authorList>
            <person name="Rey M.W."/>
            <person name="Ramaiya P."/>
            <person name="Nelson B.A."/>
            <person name="Brody-Karpin S.D."/>
            <person name="Zaretsky E.J."/>
            <person name="Tang M."/>
            <person name="Lopez de Leon A."/>
            <person name="Xiang H."/>
            <person name="Gusti V."/>
            <person name="Clausen I.G."/>
            <person name="Olsen P.B."/>
            <person name="Rasmussen M.D."/>
            <person name="Andersen J.T."/>
            <person name="Joergensen P.L."/>
            <person name="Larsen T.S."/>
            <person name="Sorokin A."/>
            <person name="Bolotin A."/>
            <person name="Lapidus A."/>
            <person name="Galleron N."/>
            <person name="Ehrlich S.D."/>
            <person name="Berka R.M."/>
        </authorList>
    </citation>
    <scope>NUCLEOTIDE SEQUENCE [LARGE SCALE GENOMIC DNA]</scope>
    <source>
        <strain>ATCC 14580 / DSM 13 / JCM 2505 / CCUG 7422 / NBRC 12200 / NCIMB 9375 / NCTC 10341 / NRRL NRS-1264 / Gibson 46</strain>
    </source>
</reference>